<sequence length="117" mass="12434">MDKKAARIRRATKARRKMLELGATRLVVHRTPRHIYAQVIAASGAEVLASASTVESTIREQVKYTGNADAAAAVGKAIAERALAKGVTTVAFDRSGFQYHGRVAALAAAAREAGLQF</sequence>
<feature type="chain" id="PRO_1000214693" description="Large ribosomal subunit protein uL18">
    <location>
        <begin position="1"/>
        <end position="117"/>
    </location>
</feature>
<organism>
    <name type="scientific">Tolumonas auensis (strain DSM 9187 / NBRC 110442 / TA 4)</name>
    <dbReference type="NCBI Taxonomy" id="595494"/>
    <lineage>
        <taxon>Bacteria</taxon>
        <taxon>Pseudomonadati</taxon>
        <taxon>Pseudomonadota</taxon>
        <taxon>Gammaproteobacteria</taxon>
        <taxon>Aeromonadales</taxon>
        <taxon>Aeromonadaceae</taxon>
        <taxon>Tolumonas</taxon>
    </lineage>
</organism>
<proteinExistence type="inferred from homology"/>
<evidence type="ECO:0000255" key="1">
    <source>
        <dbReference type="HAMAP-Rule" id="MF_01337"/>
    </source>
</evidence>
<evidence type="ECO:0000305" key="2"/>
<keyword id="KW-1185">Reference proteome</keyword>
<keyword id="KW-0687">Ribonucleoprotein</keyword>
<keyword id="KW-0689">Ribosomal protein</keyword>
<keyword id="KW-0694">RNA-binding</keyword>
<keyword id="KW-0699">rRNA-binding</keyword>
<accession>C4L7U6</accession>
<comment type="function">
    <text evidence="1">This is one of the proteins that bind and probably mediate the attachment of the 5S RNA into the large ribosomal subunit, where it forms part of the central protuberance.</text>
</comment>
<comment type="subunit">
    <text evidence="1">Part of the 50S ribosomal subunit; part of the 5S rRNA/L5/L18/L25 subcomplex. Contacts the 5S and 23S rRNAs.</text>
</comment>
<comment type="similarity">
    <text evidence="1">Belongs to the universal ribosomal protein uL18 family.</text>
</comment>
<protein>
    <recommendedName>
        <fullName evidence="1">Large ribosomal subunit protein uL18</fullName>
    </recommendedName>
    <alternativeName>
        <fullName evidence="2">50S ribosomal protein L18</fullName>
    </alternativeName>
</protein>
<dbReference type="EMBL" id="CP001616">
    <property type="protein sequence ID" value="ACQ91745.1"/>
    <property type="molecule type" value="Genomic_DNA"/>
</dbReference>
<dbReference type="RefSeq" id="WP_012728344.1">
    <property type="nucleotide sequence ID" value="NC_012691.1"/>
</dbReference>
<dbReference type="SMR" id="C4L7U6"/>
<dbReference type="STRING" id="595494.Tola_0115"/>
<dbReference type="KEGG" id="tau:Tola_0115"/>
<dbReference type="eggNOG" id="COG0256">
    <property type="taxonomic scope" value="Bacteria"/>
</dbReference>
<dbReference type="HOGENOM" id="CLU_098841_0_1_6"/>
<dbReference type="OrthoDB" id="9810939at2"/>
<dbReference type="Proteomes" id="UP000009073">
    <property type="component" value="Chromosome"/>
</dbReference>
<dbReference type="GO" id="GO:0022625">
    <property type="term" value="C:cytosolic large ribosomal subunit"/>
    <property type="evidence" value="ECO:0007669"/>
    <property type="project" value="TreeGrafter"/>
</dbReference>
<dbReference type="GO" id="GO:0008097">
    <property type="term" value="F:5S rRNA binding"/>
    <property type="evidence" value="ECO:0007669"/>
    <property type="project" value="TreeGrafter"/>
</dbReference>
<dbReference type="GO" id="GO:0003735">
    <property type="term" value="F:structural constituent of ribosome"/>
    <property type="evidence" value="ECO:0007669"/>
    <property type="project" value="InterPro"/>
</dbReference>
<dbReference type="GO" id="GO:0006412">
    <property type="term" value="P:translation"/>
    <property type="evidence" value="ECO:0007669"/>
    <property type="project" value="UniProtKB-UniRule"/>
</dbReference>
<dbReference type="CDD" id="cd00432">
    <property type="entry name" value="Ribosomal_L18_L5e"/>
    <property type="match status" value="1"/>
</dbReference>
<dbReference type="FunFam" id="3.30.420.100:FF:000001">
    <property type="entry name" value="50S ribosomal protein L18"/>
    <property type="match status" value="1"/>
</dbReference>
<dbReference type="Gene3D" id="3.30.420.100">
    <property type="match status" value="1"/>
</dbReference>
<dbReference type="HAMAP" id="MF_01337_B">
    <property type="entry name" value="Ribosomal_uL18_B"/>
    <property type="match status" value="1"/>
</dbReference>
<dbReference type="InterPro" id="IPR004389">
    <property type="entry name" value="Ribosomal_uL18_bac-type"/>
</dbReference>
<dbReference type="InterPro" id="IPR005484">
    <property type="entry name" value="Ribosomal_uL18_bac/euk"/>
</dbReference>
<dbReference type="NCBIfam" id="TIGR00060">
    <property type="entry name" value="L18_bact"/>
    <property type="match status" value="1"/>
</dbReference>
<dbReference type="PANTHER" id="PTHR12899">
    <property type="entry name" value="39S RIBOSOMAL PROTEIN L18, MITOCHONDRIAL"/>
    <property type="match status" value="1"/>
</dbReference>
<dbReference type="PANTHER" id="PTHR12899:SF3">
    <property type="entry name" value="LARGE RIBOSOMAL SUBUNIT PROTEIN UL18M"/>
    <property type="match status" value="1"/>
</dbReference>
<dbReference type="Pfam" id="PF00861">
    <property type="entry name" value="Ribosomal_L18p"/>
    <property type="match status" value="1"/>
</dbReference>
<dbReference type="SUPFAM" id="SSF53137">
    <property type="entry name" value="Translational machinery components"/>
    <property type="match status" value="1"/>
</dbReference>
<reference key="1">
    <citation type="submission" date="2009-05" db="EMBL/GenBank/DDBJ databases">
        <title>Complete sequence of Tolumonas auensis DSM 9187.</title>
        <authorList>
            <consortium name="US DOE Joint Genome Institute"/>
            <person name="Lucas S."/>
            <person name="Copeland A."/>
            <person name="Lapidus A."/>
            <person name="Glavina del Rio T."/>
            <person name="Tice H."/>
            <person name="Bruce D."/>
            <person name="Goodwin L."/>
            <person name="Pitluck S."/>
            <person name="Chertkov O."/>
            <person name="Brettin T."/>
            <person name="Detter J.C."/>
            <person name="Han C."/>
            <person name="Larimer F."/>
            <person name="Land M."/>
            <person name="Hauser L."/>
            <person name="Kyrpides N."/>
            <person name="Mikhailova N."/>
            <person name="Spring S."/>
            <person name="Beller H."/>
        </authorList>
    </citation>
    <scope>NUCLEOTIDE SEQUENCE [LARGE SCALE GENOMIC DNA]</scope>
    <source>
        <strain>DSM 9187 / NBRC 110442 / TA 4</strain>
    </source>
</reference>
<gene>
    <name evidence="1" type="primary">rplR</name>
    <name type="ordered locus">Tola_0115</name>
</gene>
<name>RL18_TOLAT</name>